<gene>
    <name evidence="1" type="primary">tgtA</name>
    <name type="ordered locus">PYRAB11160</name>
    <name type="ORF">PAB0740</name>
</gene>
<keyword id="KW-0328">Glycosyltransferase</keyword>
<keyword id="KW-0479">Metal-binding</keyword>
<keyword id="KW-0808">Transferase</keyword>
<keyword id="KW-0819">tRNA processing</keyword>
<keyword id="KW-0862">Zinc</keyword>
<protein>
    <recommendedName>
        <fullName evidence="1">tRNA-guanine(15) transglycosylase</fullName>
        <ecNumber evidence="1">2.4.2.48</ecNumber>
    </recommendedName>
    <alternativeName>
        <fullName evidence="1">7-cyano-7-deazaguanine tRNA-ribosyltransferase</fullName>
    </alternativeName>
    <alternativeName>
        <fullName evidence="1">Archaeal tRNA-guanine transglycosylase</fullName>
    </alternativeName>
</protein>
<organism>
    <name type="scientific">Pyrococcus abyssi (strain GE5 / Orsay)</name>
    <dbReference type="NCBI Taxonomy" id="272844"/>
    <lineage>
        <taxon>Archaea</taxon>
        <taxon>Methanobacteriati</taxon>
        <taxon>Methanobacteriota</taxon>
        <taxon>Thermococci</taxon>
        <taxon>Thermococcales</taxon>
        <taxon>Thermococcaceae</taxon>
        <taxon>Pyrococcus</taxon>
    </lineage>
</organism>
<reference key="1">
    <citation type="journal article" date="2003" name="Mol. Microbiol.">
        <title>An integrated analysis of the genome of the hyperthermophilic archaeon Pyrococcus abyssi.</title>
        <authorList>
            <person name="Cohen G.N."/>
            <person name="Barbe V."/>
            <person name="Flament D."/>
            <person name="Galperin M."/>
            <person name="Heilig R."/>
            <person name="Lecompte O."/>
            <person name="Poch O."/>
            <person name="Prieur D."/>
            <person name="Querellou J."/>
            <person name="Ripp R."/>
            <person name="Thierry J.-C."/>
            <person name="Van der Oost J."/>
            <person name="Weissenbach J."/>
            <person name="Zivanovic Y."/>
            <person name="Forterre P."/>
        </authorList>
    </citation>
    <scope>NUCLEOTIDE SEQUENCE [LARGE SCALE GENOMIC DNA]</scope>
    <source>
        <strain>GE5 / Orsay</strain>
    </source>
</reference>
<reference key="2">
    <citation type="journal article" date="2012" name="Curr. Microbiol.">
        <title>Re-annotation of two hyperthermophilic archaea Pyrococcus abyssi GE5 and Pyrococcus furiosus DSM 3638.</title>
        <authorList>
            <person name="Gao J."/>
            <person name="Wang J."/>
        </authorList>
    </citation>
    <scope>GENOME REANNOTATION</scope>
    <source>
        <strain>GE5 / Orsay</strain>
    </source>
</reference>
<proteinExistence type="inferred from homology"/>
<name>ATGT_PYRAB</name>
<evidence type="ECO:0000255" key="1">
    <source>
        <dbReference type="HAMAP-Rule" id="MF_01634"/>
    </source>
</evidence>
<comment type="function">
    <text evidence="1">Exchanges the guanine residue with 7-cyano-7-deazaguanine (preQ0) at position 15 in the dihydrouridine loop (D-loop) of archaeal tRNAs.</text>
</comment>
<comment type="catalytic activity">
    <reaction evidence="1">
        <text>guanosine(15) in tRNA + 7-cyano-7-deazaguanine = 7-cyano-7-carbaguanosine(15) in tRNA + guanine</text>
        <dbReference type="Rhea" id="RHEA:43164"/>
        <dbReference type="Rhea" id="RHEA-COMP:10371"/>
        <dbReference type="Rhea" id="RHEA-COMP:10372"/>
        <dbReference type="ChEBI" id="CHEBI:16235"/>
        <dbReference type="ChEBI" id="CHEBI:45075"/>
        <dbReference type="ChEBI" id="CHEBI:74269"/>
        <dbReference type="ChEBI" id="CHEBI:82850"/>
        <dbReference type="EC" id="2.4.2.48"/>
    </reaction>
</comment>
<comment type="cofactor">
    <cofactor evidence="1">
        <name>Zn(2+)</name>
        <dbReference type="ChEBI" id="CHEBI:29105"/>
    </cofactor>
    <text evidence="1">Binds 1 zinc ion per subunit.</text>
</comment>
<comment type="pathway">
    <text evidence="1">tRNA modification; archaeosine-tRNA biosynthesis.</text>
</comment>
<comment type="similarity">
    <text evidence="1">Belongs to the archaeosine tRNA-ribosyltransferase family.</text>
</comment>
<dbReference type="EC" id="2.4.2.48" evidence="1"/>
<dbReference type="EMBL" id="AJ248286">
    <property type="protein sequence ID" value="CAB50027.1"/>
    <property type="molecule type" value="Genomic_DNA"/>
</dbReference>
<dbReference type="EMBL" id="HE613800">
    <property type="protein sequence ID" value="CCE70530.1"/>
    <property type="molecule type" value="Genomic_DNA"/>
</dbReference>
<dbReference type="PIR" id="F75090">
    <property type="entry name" value="F75090"/>
</dbReference>
<dbReference type="RefSeq" id="WP_010868234.1">
    <property type="nucleotide sequence ID" value="NC_000868.1"/>
</dbReference>
<dbReference type="SMR" id="Q9UZN0"/>
<dbReference type="STRING" id="272844.PAB0740"/>
<dbReference type="KEGG" id="pab:PAB0740"/>
<dbReference type="PATRIC" id="fig|272844.11.peg.1173"/>
<dbReference type="eggNOG" id="arCOG00989">
    <property type="taxonomic scope" value="Archaea"/>
</dbReference>
<dbReference type="eggNOG" id="arCOG00991">
    <property type="taxonomic scope" value="Archaea"/>
</dbReference>
<dbReference type="HOGENOM" id="CLU_030083_0_0_2"/>
<dbReference type="OrthoDB" id="6871at2157"/>
<dbReference type="PhylomeDB" id="Q9UZN0"/>
<dbReference type="UniPathway" id="UPA00393"/>
<dbReference type="Proteomes" id="UP000000810">
    <property type="component" value="Chromosome"/>
</dbReference>
<dbReference type="Proteomes" id="UP000009139">
    <property type="component" value="Chromosome"/>
</dbReference>
<dbReference type="GO" id="GO:0005737">
    <property type="term" value="C:cytoplasm"/>
    <property type="evidence" value="ECO:0007669"/>
    <property type="project" value="TreeGrafter"/>
</dbReference>
<dbReference type="GO" id="GO:0016763">
    <property type="term" value="F:pentosyltransferase activity"/>
    <property type="evidence" value="ECO:0007669"/>
    <property type="project" value="UniProtKB-UniRule"/>
</dbReference>
<dbReference type="GO" id="GO:0003723">
    <property type="term" value="F:RNA binding"/>
    <property type="evidence" value="ECO:0007669"/>
    <property type="project" value="InterPro"/>
</dbReference>
<dbReference type="GO" id="GO:0008270">
    <property type="term" value="F:zinc ion binding"/>
    <property type="evidence" value="ECO:0007669"/>
    <property type="project" value="UniProtKB-UniRule"/>
</dbReference>
<dbReference type="GO" id="GO:0002099">
    <property type="term" value="P:tRNA wobble guanine modification"/>
    <property type="evidence" value="ECO:0007669"/>
    <property type="project" value="TreeGrafter"/>
</dbReference>
<dbReference type="CDD" id="cd21149">
    <property type="entry name" value="PUA_archaeosine_TGT"/>
    <property type="match status" value="1"/>
</dbReference>
<dbReference type="Gene3D" id="3.90.1020.10">
    <property type="entry name" value="ArcTGT, C1 domain"/>
    <property type="match status" value="1"/>
</dbReference>
<dbReference type="Gene3D" id="3.10.450.90">
    <property type="entry name" value="ArcTGT, C2 domain"/>
    <property type="match status" value="1"/>
</dbReference>
<dbReference type="Gene3D" id="2.30.130.10">
    <property type="entry name" value="PUA domain"/>
    <property type="match status" value="1"/>
</dbReference>
<dbReference type="Gene3D" id="3.20.20.105">
    <property type="entry name" value="Queuine tRNA-ribosyltransferase-like"/>
    <property type="match status" value="1"/>
</dbReference>
<dbReference type="HAMAP" id="MF_01634">
    <property type="entry name" value="TgtA_arch"/>
    <property type="match status" value="1"/>
</dbReference>
<dbReference type="InterPro" id="IPR050076">
    <property type="entry name" value="ArchSynthase1/Queuine_TRR"/>
</dbReference>
<dbReference type="InterPro" id="IPR038370">
    <property type="entry name" value="ArcTGT_C1_sf"/>
</dbReference>
<dbReference type="InterPro" id="IPR002478">
    <property type="entry name" value="PUA"/>
</dbReference>
<dbReference type="InterPro" id="IPR015947">
    <property type="entry name" value="PUA-like_sf"/>
</dbReference>
<dbReference type="InterPro" id="IPR036974">
    <property type="entry name" value="PUA_sf"/>
</dbReference>
<dbReference type="InterPro" id="IPR036511">
    <property type="entry name" value="TGT-like_sf"/>
</dbReference>
<dbReference type="InterPro" id="IPR032729">
    <property type="entry name" value="TGT_C1"/>
</dbReference>
<dbReference type="InterPro" id="IPR029402">
    <property type="entry name" value="TGT_C2"/>
</dbReference>
<dbReference type="InterPro" id="IPR038250">
    <property type="entry name" value="TGT_C2_sf"/>
</dbReference>
<dbReference type="InterPro" id="IPR004804">
    <property type="entry name" value="TgtA"/>
</dbReference>
<dbReference type="InterPro" id="IPR002616">
    <property type="entry name" value="tRNA_ribo_trans-like"/>
</dbReference>
<dbReference type="InterPro" id="IPR004521">
    <property type="entry name" value="Uncharacterised_CHP00451"/>
</dbReference>
<dbReference type="NCBIfam" id="TIGR00432">
    <property type="entry name" value="arcsn_tRNA_tgt"/>
    <property type="match status" value="1"/>
</dbReference>
<dbReference type="NCBIfam" id="TIGR00449">
    <property type="entry name" value="tgt_general"/>
    <property type="match status" value="1"/>
</dbReference>
<dbReference type="NCBIfam" id="TIGR00451">
    <property type="entry name" value="unchar_dom_2"/>
    <property type="match status" value="1"/>
</dbReference>
<dbReference type="PANTHER" id="PTHR46499">
    <property type="entry name" value="QUEUINE TRNA-RIBOSYLTRANSFERASE"/>
    <property type="match status" value="1"/>
</dbReference>
<dbReference type="PANTHER" id="PTHR46499:SF1">
    <property type="entry name" value="QUEUINE TRNA-RIBOSYLTRANSFERASE"/>
    <property type="match status" value="1"/>
</dbReference>
<dbReference type="Pfam" id="PF01472">
    <property type="entry name" value="PUA"/>
    <property type="match status" value="1"/>
</dbReference>
<dbReference type="Pfam" id="PF01702">
    <property type="entry name" value="TGT"/>
    <property type="match status" value="1"/>
</dbReference>
<dbReference type="Pfam" id="PF14809">
    <property type="entry name" value="TGT_C1"/>
    <property type="match status" value="1"/>
</dbReference>
<dbReference type="Pfam" id="PF14810">
    <property type="entry name" value="TGT_C2"/>
    <property type="match status" value="1"/>
</dbReference>
<dbReference type="SMART" id="SM00359">
    <property type="entry name" value="PUA"/>
    <property type="match status" value="1"/>
</dbReference>
<dbReference type="SUPFAM" id="SSF88802">
    <property type="entry name" value="Pre-PUA domain"/>
    <property type="match status" value="1"/>
</dbReference>
<dbReference type="SUPFAM" id="SSF88697">
    <property type="entry name" value="PUA domain-like"/>
    <property type="match status" value="1"/>
</dbReference>
<dbReference type="SUPFAM" id="SSF51713">
    <property type="entry name" value="tRNA-guanine transglycosylase"/>
    <property type="match status" value="1"/>
</dbReference>
<dbReference type="PROSITE" id="PS50890">
    <property type="entry name" value="PUA"/>
    <property type="match status" value="1"/>
</dbReference>
<feature type="chain" id="PRO_0000247882" description="tRNA-guanine(15) transglycosylase">
    <location>
        <begin position="1"/>
        <end position="584"/>
    </location>
</feature>
<feature type="domain" description="PUA" evidence="1">
    <location>
        <begin position="507"/>
        <end position="582"/>
    </location>
</feature>
<feature type="active site" description="Nucleophile" evidence="1">
    <location>
        <position position="95"/>
    </location>
</feature>
<feature type="binding site" evidence="1">
    <location>
        <position position="130"/>
    </location>
    <ligand>
        <name>substrate</name>
    </ligand>
</feature>
<feature type="binding site" evidence="1">
    <location>
        <position position="196"/>
    </location>
    <ligand>
        <name>substrate</name>
    </ligand>
</feature>
<feature type="binding site" evidence="1">
    <location>
        <position position="279"/>
    </location>
    <ligand>
        <name>Zn(2+)</name>
        <dbReference type="ChEBI" id="CHEBI:29105"/>
    </ligand>
</feature>
<feature type="binding site" evidence="1">
    <location>
        <position position="281"/>
    </location>
    <ligand>
        <name>Zn(2+)</name>
        <dbReference type="ChEBI" id="CHEBI:29105"/>
    </ligand>
</feature>
<feature type="binding site" evidence="1">
    <location>
        <position position="284"/>
    </location>
    <ligand>
        <name>Zn(2+)</name>
        <dbReference type="ChEBI" id="CHEBI:29105"/>
    </ligand>
</feature>
<accession>Q9UZN0</accession>
<accession>G8ZJS1</accession>
<sequence>MSRGDKMLKFEVKARDGAGRIGKLEVNGKKIETPAIMPVVNPKQLIVEPKELEKMGFDIIITNSYIIYKDRELREKALEVGIHKLLGYDGIIEVDSGSFQLMRYGNVDVSNREIVEFQHRIGVDIGTFLDIPTPPDAPKEKAMEDLKITLERAREAEEIKEIAMNAAIQGSTYTDLRRYAARRLSSMNFEIHPIGGVVPLLEAYRFREVVDIVISSKMALRPDRPVHLFGAGHPMVFALAVAMGVDLFDSASYALYAKDDRYLTPEGTKRLDELEYFPCSCPVCSRYTPQELREMPKEERARLLAIHNLWVIKEEIERIKQAIREGELWRLVDERARSHPKLYSAYKRLLDHYTFLEEFEPVTKKSAVFKISHESLRWPLVRRARERAERVNSKFGDLVEHPIFGKVTKYLTLTYPFAQSEAEDEFSIEKPTRENAIRYVMAIAEYQFGENASKAFEGAEVELARTGMPRQVKLNGKRLATVRAEDGFLTLGIEGAKRLHKVLEYPRMRVVVSEEAEPFARKGKDVFAKFVLFADPGIRPYDEVLVVNEKDELLATGQALMSGREMIVFQYGRAVKVRRGISGG</sequence>